<protein>
    <recommendedName>
        <fullName evidence="1">Glutathione-regulated potassium-efflux system ancillary protein KefF</fullName>
    </recommendedName>
    <alternativeName>
        <fullName evidence="1">Quinone oxidoreductase KefF</fullName>
        <ecNumber evidence="1">1.6.5.2</ecNumber>
    </alternativeName>
</protein>
<evidence type="ECO:0000255" key="1">
    <source>
        <dbReference type="HAMAP-Rule" id="MF_01414"/>
    </source>
</evidence>
<organism>
    <name type="scientific">Shigella boydii serotype 18 (strain CDC 3083-94 / BS512)</name>
    <dbReference type="NCBI Taxonomy" id="344609"/>
    <lineage>
        <taxon>Bacteria</taxon>
        <taxon>Pseudomonadati</taxon>
        <taxon>Pseudomonadota</taxon>
        <taxon>Gammaproteobacteria</taxon>
        <taxon>Enterobacterales</taxon>
        <taxon>Enterobacteriaceae</taxon>
        <taxon>Shigella</taxon>
    </lineage>
</organism>
<sequence length="176" mass="20163">MILIIYAHPYPHHSHANKRMLEQARTLEGVEIRSLYQLYPDFNIDIAAEQEALSRADLIVWQHPMQWYSIPPLLKLWIDKVLSHGWAYGHGGKALHGKHLLWAVTTGGGESHFEIGAHPGFDVLSQPLQATAIYCGLNWLPPFAMHCTFICDDETLEGQARHYKQRLLEWQEAHHG</sequence>
<feature type="chain" id="PRO_1000145570" description="Glutathione-regulated potassium-efflux system ancillary protein KefF">
    <location>
        <begin position="1"/>
        <end position="176"/>
    </location>
</feature>
<feature type="binding site" evidence="1">
    <location>
        <position position="8"/>
    </location>
    <ligand>
        <name>FMN</name>
        <dbReference type="ChEBI" id="CHEBI:58210"/>
    </ligand>
</feature>
<feature type="binding site" evidence="1">
    <location>
        <begin position="14"/>
        <end position="17"/>
    </location>
    <ligand>
        <name>FMN</name>
        <dbReference type="ChEBI" id="CHEBI:58210"/>
    </ligand>
</feature>
<feature type="binding site" evidence="1">
    <location>
        <begin position="65"/>
        <end position="68"/>
    </location>
    <ligand>
        <name>FMN</name>
        <dbReference type="ChEBI" id="CHEBI:58210"/>
    </ligand>
</feature>
<feature type="binding site" evidence="1">
    <location>
        <begin position="105"/>
        <end position="108"/>
    </location>
    <ligand>
        <name>FMN</name>
        <dbReference type="ChEBI" id="CHEBI:58210"/>
    </ligand>
</feature>
<gene>
    <name evidence="1" type="primary">kefF</name>
    <name type="ordered locus">SbBS512_E0040</name>
</gene>
<keyword id="KW-0997">Cell inner membrane</keyword>
<keyword id="KW-1003">Cell membrane</keyword>
<keyword id="KW-0285">Flavoprotein</keyword>
<keyword id="KW-0288">FMN</keyword>
<keyword id="KW-0472">Membrane</keyword>
<keyword id="KW-0520">NAD</keyword>
<keyword id="KW-0560">Oxidoreductase</keyword>
<keyword id="KW-1185">Reference proteome</keyword>
<comment type="function">
    <text evidence="1">Regulatory subunit of a potassium efflux system that confers protection against electrophiles. Required for full activity of KefC. Shows redox enzymatic activity, but this enzymatic activity is not required for activation of KefC.</text>
</comment>
<comment type="catalytic activity">
    <reaction evidence="1">
        <text>a quinone + NADH + H(+) = a quinol + NAD(+)</text>
        <dbReference type="Rhea" id="RHEA:46160"/>
        <dbReference type="ChEBI" id="CHEBI:15378"/>
        <dbReference type="ChEBI" id="CHEBI:24646"/>
        <dbReference type="ChEBI" id="CHEBI:57540"/>
        <dbReference type="ChEBI" id="CHEBI:57945"/>
        <dbReference type="ChEBI" id="CHEBI:132124"/>
        <dbReference type="EC" id="1.6.5.2"/>
    </reaction>
</comment>
<comment type="catalytic activity">
    <reaction evidence="1">
        <text>a quinone + NADPH + H(+) = a quinol + NADP(+)</text>
        <dbReference type="Rhea" id="RHEA:46164"/>
        <dbReference type="ChEBI" id="CHEBI:15378"/>
        <dbReference type="ChEBI" id="CHEBI:24646"/>
        <dbReference type="ChEBI" id="CHEBI:57783"/>
        <dbReference type="ChEBI" id="CHEBI:58349"/>
        <dbReference type="ChEBI" id="CHEBI:132124"/>
        <dbReference type="EC" id="1.6.5.2"/>
    </reaction>
</comment>
<comment type="cofactor">
    <cofactor evidence="1">
        <name>FMN</name>
        <dbReference type="ChEBI" id="CHEBI:58210"/>
    </cofactor>
</comment>
<comment type="subunit">
    <text evidence="1">Homodimer. Interacts with KefC.</text>
</comment>
<comment type="subcellular location">
    <subcellularLocation>
        <location evidence="1">Cell inner membrane</location>
        <topology evidence="1">Peripheral membrane protein</topology>
        <orientation evidence="1">Cytoplasmic side</orientation>
    </subcellularLocation>
</comment>
<comment type="similarity">
    <text evidence="1">Belongs to the NAD(P)H dehydrogenase (quinone) family. KefF subfamily.</text>
</comment>
<name>KEFF_SHIB3</name>
<dbReference type="EC" id="1.6.5.2" evidence="1"/>
<dbReference type="EMBL" id="CP001063">
    <property type="protein sequence ID" value="ACD07697.1"/>
    <property type="molecule type" value="Genomic_DNA"/>
</dbReference>
<dbReference type="RefSeq" id="WP_000600735.1">
    <property type="nucleotide sequence ID" value="NC_010658.1"/>
</dbReference>
<dbReference type="SMR" id="B2U254"/>
<dbReference type="STRING" id="344609.SbBS512_E0040"/>
<dbReference type="KEGG" id="sbc:SbBS512_E0040"/>
<dbReference type="HOGENOM" id="CLU_058643_0_2_6"/>
<dbReference type="Proteomes" id="UP000001030">
    <property type="component" value="Chromosome"/>
</dbReference>
<dbReference type="GO" id="GO:0005886">
    <property type="term" value="C:plasma membrane"/>
    <property type="evidence" value="ECO:0007669"/>
    <property type="project" value="UniProtKB-SubCell"/>
</dbReference>
<dbReference type="GO" id="GO:0009055">
    <property type="term" value="F:electron transfer activity"/>
    <property type="evidence" value="ECO:0007669"/>
    <property type="project" value="TreeGrafter"/>
</dbReference>
<dbReference type="GO" id="GO:0010181">
    <property type="term" value="F:FMN binding"/>
    <property type="evidence" value="ECO:0007669"/>
    <property type="project" value="UniProtKB-UniRule"/>
</dbReference>
<dbReference type="GO" id="GO:0050136">
    <property type="term" value="F:NADH:ubiquinone reductase (non-electrogenic) activity"/>
    <property type="evidence" value="ECO:0007669"/>
    <property type="project" value="RHEA"/>
</dbReference>
<dbReference type="GO" id="GO:0008753">
    <property type="term" value="F:NADPH dehydrogenase (quinone) activity"/>
    <property type="evidence" value="ECO:0007669"/>
    <property type="project" value="RHEA"/>
</dbReference>
<dbReference type="GO" id="GO:1901381">
    <property type="term" value="P:positive regulation of potassium ion transmembrane transport"/>
    <property type="evidence" value="ECO:0007669"/>
    <property type="project" value="UniProtKB-UniRule"/>
</dbReference>
<dbReference type="GO" id="GO:0006813">
    <property type="term" value="P:potassium ion transport"/>
    <property type="evidence" value="ECO:0007669"/>
    <property type="project" value="InterPro"/>
</dbReference>
<dbReference type="FunFam" id="3.40.50.360:FF:000008">
    <property type="entry name" value="Glutathione-regulated potassium-efflux system ancillary protein KefF"/>
    <property type="match status" value="1"/>
</dbReference>
<dbReference type="Gene3D" id="3.40.50.360">
    <property type="match status" value="1"/>
</dbReference>
<dbReference type="HAMAP" id="MF_01414">
    <property type="entry name" value="K_H_efflux_KefF"/>
    <property type="match status" value="1"/>
</dbReference>
<dbReference type="InterPro" id="IPR003680">
    <property type="entry name" value="Flavodoxin_fold"/>
</dbReference>
<dbReference type="InterPro" id="IPR029039">
    <property type="entry name" value="Flavoprotein-like_sf"/>
</dbReference>
<dbReference type="InterPro" id="IPR023948">
    <property type="entry name" value="K_H_efflux_KefF"/>
</dbReference>
<dbReference type="InterPro" id="IPR046980">
    <property type="entry name" value="KefG/KefF"/>
</dbReference>
<dbReference type="NCBIfam" id="NF002044">
    <property type="entry name" value="PRK00871.1"/>
    <property type="match status" value="1"/>
</dbReference>
<dbReference type="PANTHER" id="PTHR47307:SF2">
    <property type="entry name" value="GLUTATHIONE-REGULATED POTASSIUM-EFFLUX SYSTEM ANCILLARY PROTEIN KEFF"/>
    <property type="match status" value="1"/>
</dbReference>
<dbReference type="PANTHER" id="PTHR47307">
    <property type="entry name" value="GLUTATHIONE-REGULATED POTASSIUM-EFFLUX SYSTEM ANCILLARY PROTEIN KEFG"/>
    <property type="match status" value="1"/>
</dbReference>
<dbReference type="Pfam" id="PF02525">
    <property type="entry name" value="Flavodoxin_2"/>
    <property type="match status" value="1"/>
</dbReference>
<dbReference type="SUPFAM" id="SSF52218">
    <property type="entry name" value="Flavoproteins"/>
    <property type="match status" value="1"/>
</dbReference>
<reference key="1">
    <citation type="submission" date="2008-05" db="EMBL/GenBank/DDBJ databases">
        <title>Complete sequence of Shigella boydii serotype 18 strain BS512.</title>
        <authorList>
            <person name="Rasko D.A."/>
            <person name="Rosovitz M."/>
            <person name="Maurelli A.T."/>
            <person name="Myers G."/>
            <person name="Seshadri R."/>
            <person name="Cer R."/>
            <person name="Jiang L."/>
            <person name="Ravel J."/>
            <person name="Sebastian Y."/>
        </authorList>
    </citation>
    <scope>NUCLEOTIDE SEQUENCE [LARGE SCALE GENOMIC DNA]</scope>
    <source>
        <strain>CDC 3083-94 / BS512</strain>
    </source>
</reference>
<proteinExistence type="inferred from homology"/>
<accession>B2U254</accession>